<gene>
    <name evidence="1" type="primary">dnaG</name>
    <name type="ordered locus">Msm_0427</name>
</gene>
<evidence type="ECO:0000255" key="1">
    <source>
        <dbReference type="HAMAP-Rule" id="MF_00007"/>
    </source>
</evidence>
<evidence type="ECO:0000256" key="2">
    <source>
        <dbReference type="SAM" id="MobiDB-lite"/>
    </source>
</evidence>
<reference key="1">
    <citation type="journal article" date="2007" name="Proc. Natl. Acad. Sci. U.S.A.">
        <title>Genomic and metabolic adaptations of Methanobrevibacter smithii to the human gut.</title>
        <authorList>
            <person name="Samuel B.S."/>
            <person name="Hansen E.E."/>
            <person name="Manchester J.K."/>
            <person name="Coutinho P.M."/>
            <person name="Henrissat B."/>
            <person name="Fulton R."/>
            <person name="Latreille P."/>
            <person name="Kim K."/>
            <person name="Wilson R.K."/>
            <person name="Gordon J.I."/>
        </authorList>
    </citation>
    <scope>NUCLEOTIDE SEQUENCE [LARGE SCALE GENOMIC DNA]</scope>
    <source>
        <strain>ATCC 35061 / DSM 861 / OCM 144 / PS</strain>
    </source>
</reference>
<sequence length="419" mass="46506">MGKGEELTTTKYLIHAQINANGIVEKPDVVGAVFGQTEGLLSNDLDLRELQRTGRIGRIQVMIHSNGGRAKGEIVIPSSLDRVETAILAASLETINRVGPCEAEIHTVKVEDVRAVKREQVVNRAKEIYKNMIESASPASMRMIEEVREAMRVHEISEYGEDRLPAGPSIHTSDAIIVVEGRSDVLNLLKYGIKNTVAVEGVSVPQSIGNLSKKRTTTAFVDGDRGGELILKELLQIGDVDYITRAPKGKEVEDLEKDEVLVALRDKVPTAQFLANHNILSESDSKNSHKKHNGKHNNKHSNNKHQQHETKVKEEVQIEEIPIEDDETKLMKDMLKEFEGSGCGAILDEALNMTQEVEVENIYEEIKNIETSADTVIFDGIISQRLVDVASLKGIKRLVAFRSMNIVKKPDNLKIITMD</sequence>
<accession>A5UKA4</accession>
<proteinExistence type="inferred from homology"/>
<name>DNAG_METS3</name>
<organism>
    <name type="scientific">Methanobrevibacter smithii (strain ATCC 35061 / DSM 861 / OCM 144 / PS)</name>
    <dbReference type="NCBI Taxonomy" id="420247"/>
    <lineage>
        <taxon>Archaea</taxon>
        <taxon>Methanobacteriati</taxon>
        <taxon>Methanobacteriota</taxon>
        <taxon>Methanomada group</taxon>
        <taxon>Methanobacteria</taxon>
        <taxon>Methanobacteriales</taxon>
        <taxon>Methanobacteriaceae</taxon>
        <taxon>Methanobrevibacter</taxon>
    </lineage>
</organism>
<protein>
    <recommendedName>
        <fullName evidence="1">DNA primase DnaG</fullName>
        <ecNumber evidence="1">2.7.7.101</ecNumber>
    </recommendedName>
</protein>
<dbReference type="EC" id="2.7.7.101" evidence="1"/>
<dbReference type="EMBL" id="CP000678">
    <property type="protein sequence ID" value="ABQ86632.1"/>
    <property type="molecule type" value="Genomic_DNA"/>
</dbReference>
<dbReference type="RefSeq" id="WP_004036806.1">
    <property type="nucleotide sequence ID" value="NZ_CP117965.1"/>
</dbReference>
<dbReference type="SMR" id="A5UKA4"/>
<dbReference type="STRING" id="420247.Msm_0427"/>
<dbReference type="EnsemblBacteria" id="ABQ86632">
    <property type="protein sequence ID" value="ABQ86632"/>
    <property type="gene ID" value="Msm_0427"/>
</dbReference>
<dbReference type="GeneID" id="78817054"/>
<dbReference type="KEGG" id="msi:Msm_0427"/>
<dbReference type="PATRIC" id="fig|420247.28.peg.428"/>
<dbReference type="eggNOG" id="arCOG04281">
    <property type="taxonomic scope" value="Archaea"/>
</dbReference>
<dbReference type="HOGENOM" id="CLU_034626_0_0_2"/>
<dbReference type="Proteomes" id="UP000001992">
    <property type="component" value="Chromosome"/>
</dbReference>
<dbReference type="GO" id="GO:0005737">
    <property type="term" value="C:cytoplasm"/>
    <property type="evidence" value="ECO:0007669"/>
    <property type="project" value="TreeGrafter"/>
</dbReference>
<dbReference type="GO" id="GO:0000428">
    <property type="term" value="C:DNA-directed RNA polymerase complex"/>
    <property type="evidence" value="ECO:0007669"/>
    <property type="project" value="UniProtKB-KW"/>
</dbReference>
<dbReference type="GO" id="GO:0000178">
    <property type="term" value="C:exosome (RNase complex)"/>
    <property type="evidence" value="ECO:0007669"/>
    <property type="project" value="UniProtKB-KW"/>
</dbReference>
<dbReference type="GO" id="GO:1990077">
    <property type="term" value="C:primosome complex"/>
    <property type="evidence" value="ECO:0007669"/>
    <property type="project" value="UniProtKB-KW"/>
</dbReference>
<dbReference type="GO" id="GO:0003899">
    <property type="term" value="F:DNA-directed RNA polymerase activity"/>
    <property type="evidence" value="ECO:0007669"/>
    <property type="project" value="InterPro"/>
</dbReference>
<dbReference type="GO" id="GO:0046872">
    <property type="term" value="F:metal ion binding"/>
    <property type="evidence" value="ECO:0007669"/>
    <property type="project" value="UniProtKB-KW"/>
</dbReference>
<dbReference type="GO" id="GO:0008143">
    <property type="term" value="F:poly(A) binding"/>
    <property type="evidence" value="ECO:0007669"/>
    <property type="project" value="InterPro"/>
</dbReference>
<dbReference type="GO" id="GO:0006269">
    <property type="term" value="P:DNA replication, synthesis of primer"/>
    <property type="evidence" value="ECO:0007669"/>
    <property type="project" value="UniProtKB-UniRule"/>
</dbReference>
<dbReference type="CDD" id="cd01029">
    <property type="entry name" value="TOPRIM_primases"/>
    <property type="match status" value="1"/>
</dbReference>
<dbReference type="Gene3D" id="3.40.1360.10">
    <property type="match status" value="1"/>
</dbReference>
<dbReference type="HAMAP" id="MF_00007">
    <property type="entry name" value="DNA_primase_DnaG_arc"/>
    <property type="match status" value="1"/>
</dbReference>
<dbReference type="InterPro" id="IPR050219">
    <property type="entry name" value="DnaG_primase"/>
</dbReference>
<dbReference type="InterPro" id="IPR020607">
    <property type="entry name" value="Primase_DnaG_arc"/>
</dbReference>
<dbReference type="InterPro" id="IPR034154">
    <property type="entry name" value="TOPRIM_DnaG/twinkle"/>
</dbReference>
<dbReference type="InterPro" id="IPR006171">
    <property type="entry name" value="TOPRIM_dom"/>
</dbReference>
<dbReference type="NCBIfam" id="NF003108">
    <property type="entry name" value="PRK04031.1-1"/>
    <property type="match status" value="1"/>
</dbReference>
<dbReference type="PANTHER" id="PTHR30313">
    <property type="entry name" value="DNA PRIMASE"/>
    <property type="match status" value="1"/>
</dbReference>
<dbReference type="PANTHER" id="PTHR30313:SF2">
    <property type="entry name" value="DNA PRIMASE"/>
    <property type="match status" value="1"/>
</dbReference>
<dbReference type="Pfam" id="PF13662">
    <property type="entry name" value="Toprim_4"/>
    <property type="match status" value="1"/>
</dbReference>
<dbReference type="SMART" id="SM00493">
    <property type="entry name" value="TOPRIM"/>
    <property type="match status" value="1"/>
</dbReference>
<dbReference type="SUPFAM" id="SSF56731">
    <property type="entry name" value="DNA primase core"/>
    <property type="match status" value="1"/>
</dbReference>
<dbReference type="PROSITE" id="PS50880">
    <property type="entry name" value="TOPRIM"/>
    <property type="match status" value="1"/>
</dbReference>
<keyword id="KW-0235">DNA replication</keyword>
<keyword id="KW-0240">DNA-directed RNA polymerase</keyword>
<keyword id="KW-0271">Exosome</keyword>
<keyword id="KW-0460">Magnesium</keyword>
<keyword id="KW-0479">Metal-binding</keyword>
<keyword id="KW-0548">Nucleotidyltransferase</keyword>
<keyword id="KW-0639">Primosome</keyword>
<keyword id="KW-0804">Transcription</keyword>
<keyword id="KW-0808">Transferase</keyword>
<comment type="function">
    <text evidence="1">RNA polymerase that catalyzes the synthesis of short RNA molecules used as primers for DNA polymerase during DNA replication. Also part of the exosome, which is a complex involved in RNA degradation. Acts as a poly(A)-binding protein that enhances the interaction between heteromeric, adenine-rich transcripts and the exosome.</text>
</comment>
<comment type="catalytic activity">
    <reaction evidence="1">
        <text>ssDNA + n NTP = ssDNA/pppN(pN)n-1 hybrid + (n-1) diphosphate.</text>
        <dbReference type="EC" id="2.7.7.101"/>
    </reaction>
</comment>
<comment type="cofactor">
    <cofactor evidence="1">
        <name>Mg(2+)</name>
        <dbReference type="ChEBI" id="CHEBI:18420"/>
    </cofactor>
    <text evidence="1">Binds two Mg(2+) per subunit.</text>
</comment>
<comment type="subunit">
    <text evidence="1">Forms a ternary complex with MCM helicase and DNA. Component of the archaeal exosome complex.</text>
</comment>
<comment type="similarity">
    <text evidence="1">Belongs to the archaeal DnaG primase family.</text>
</comment>
<feature type="chain" id="PRO_0000321492" description="DNA primase DnaG">
    <location>
        <begin position="1"/>
        <end position="419"/>
    </location>
</feature>
<feature type="domain" description="Toprim" evidence="1">
    <location>
        <begin position="174"/>
        <end position="260"/>
    </location>
</feature>
<feature type="region of interest" description="Disordered" evidence="2">
    <location>
        <begin position="277"/>
        <end position="314"/>
    </location>
</feature>
<feature type="compositionally biased region" description="Basic residues" evidence="2">
    <location>
        <begin position="288"/>
        <end position="305"/>
    </location>
</feature>
<feature type="binding site" evidence="1">
    <location>
        <position position="180"/>
    </location>
    <ligand>
        <name>Mg(2+)</name>
        <dbReference type="ChEBI" id="CHEBI:18420"/>
        <label>1</label>
        <note>catalytic</note>
    </ligand>
</feature>
<feature type="binding site" evidence="1">
    <location>
        <position position="222"/>
    </location>
    <ligand>
        <name>Mg(2+)</name>
        <dbReference type="ChEBI" id="CHEBI:18420"/>
        <label>1</label>
        <note>catalytic</note>
    </ligand>
</feature>
<feature type="binding site" evidence="1">
    <location>
        <position position="222"/>
    </location>
    <ligand>
        <name>Mg(2+)</name>
        <dbReference type="ChEBI" id="CHEBI:18420"/>
        <label>2</label>
    </ligand>
</feature>
<feature type="binding site" evidence="1">
    <location>
        <position position="224"/>
    </location>
    <ligand>
        <name>Mg(2+)</name>
        <dbReference type="ChEBI" id="CHEBI:18420"/>
        <label>2</label>
    </ligand>
</feature>